<keyword id="KW-0238">DNA-binding</keyword>
<keyword id="KW-1185">Reference proteome</keyword>
<keyword id="KW-0804">Transcription</keyword>
<keyword id="KW-0805">Transcription regulation</keyword>
<proteinExistence type="evidence at protein level"/>
<reference key="1">
    <citation type="submission" date="2004-01" db="EMBL/GenBank/DDBJ databases">
        <title>Bacteriophage T5 complete genome.</title>
        <authorList>
            <person name="Ksenzenko V.N."/>
            <person name="Kaliman A.V."/>
            <person name="Krutilina A.I."/>
            <person name="Shlyapnikov M.G."/>
        </authorList>
    </citation>
    <scope>NUCLEOTIDE SEQUENCE [LARGE SCALE GENOMIC DNA]</scope>
</reference>
<reference key="2">
    <citation type="submission" date="2004-07" db="EMBL/GenBank/DDBJ databases">
        <authorList>
            <person name="Zivanovic Y."/>
            <person name="Boulanger P."/>
            <person name="Confalonieri F."/>
            <person name="Dutertre M."/>
            <person name="Decottignies P."/>
        </authorList>
    </citation>
    <scope>NUCLEOTIDE SEQUENCE [LARGE SCALE GENOMIC DNA]</scope>
</reference>
<reference key="3">
    <citation type="journal article" date="2005" name="Virology">
        <title>Complete genome sequence of bacteriophage T5.</title>
        <authorList>
            <person name="Wang J."/>
            <person name="Jiang Y."/>
            <person name="Vincent M."/>
            <person name="Sun Y."/>
            <person name="Yu H."/>
            <person name="Wang J."/>
            <person name="Bao Q."/>
            <person name="Kong H."/>
            <person name="Hu S."/>
        </authorList>
    </citation>
    <scope>NUCLEOTIDE SEQUENCE [LARGE SCALE GENOMIC DNA]</scope>
    <source>
        <strain evidence="4">ATCC 11303-B5</strain>
    </source>
</reference>
<reference key="4">
    <citation type="journal article" date="1979" name="J. Biol. Chem.">
        <title>The purification and properties of a double-stranded DNA-binding protein encoded by the gene D5 of bacteriophage T5.</title>
        <authorList>
            <person name="Rice A.C."/>
            <person name="Ficht T.A."/>
            <person name="Holladay L.A."/>
            <person name="Moyer R.W."/>
        </authorList>
    </citation>
    <scope>DNA-BINDING</scope>
</reference>
<reference key="5">
    <citation type="journal article" date="1979" name="J. Virol.">
        <title>Gene D5 product of bacteriophage T5: DNA-binding protein affecting DNA replication and late gene expression.</title>
        <authorList>
            <person name="McCorquodale D.J."/>
            <person name="Gossling J."/>
            <person name="Benzinger R."/>
            <person name="Chesney R."/>
            <person name="Lawhorne L."/>
            <person name="Moyer R.W."/>
        </authorList>
    </citation>
    <scope>FUNCTION</scope>
</reference>
<reference key="6">
    <citation type="journal article" date="1983" name="J. Virol.">
        <title>Interaction of a DNA-binding protein, the product of gene D5 of bacteriophage T5, with double-stranded DNA: effects on T5 DNA polymerase functions in vitro.</title>
        <authorList>
            <person name="Fujimura R.K."/>
            <person name="Roop B.C."/>
        </authorList>
    </citation>
    <scope>DNA-BINDING</scope>
</reference>
<name>D5_BPT5</name>
<organismHost>
    <name type="scientific">Escherichia coli</name>
    <dbReference type="NCBI Taxonomy" id="562"/>
</organismHost>
<sequence>MSKLNWNVEGVTESLKAKATALGVDVISQEQVAAIAAELAAETGKDVTARSVGSKLRKEGFEVQKANEVQKSPWTPEQEAELVDFLNAHAGQYTYAEIAAAVAGGQFGAKQVQGKILSLEMTASVKPTEKAAAVRSFTPDEETDFVNQVVAGATIEAIAAHFGRNIKQIRGKALSLLREGRIAAMPVQETSSAKTREDLLEGLDLVNMTVAEIAEKTGKSERGVKSMLSRRGLVAKDYDGAAKRAKLDAKAAAAE</sequence>
<evidence type="ECO:0000269" key="1">
    <source>
    </source>
</evidence>
<evidence type="ECO:0000312" key="2">
    <source>
        <dbReference type="EMBL" id="AAS77164.1"/>
    </source>
</evidence>
<evidence type="ECO:0000312" key="3">
    <source>
        <dbReference type="EMBL" id="AAU05255.1"/>
    </source>
</evidence>
<evidence type="ECO:0000312" key="4">
    <source>
        <dbReference type="EMBL" id="AAX12046.1"/>
    </source>
</evidence>
<feature type="chain" id="PRO_0000436442" description="Putative transcription factor D5">
    <location>
        <begin position="1"/>
        <end position="255"/>
    </location>
</feature>
<protein>
    <recommendedName>
        <fullName evidence="2">Putative transcription factor D5</fullName>
    </recommendedName>
</protein>
<dbReference type="EMBL" id="AY543070">
    <property type="protein sequence ID" value="AAS77164.1"/>
    <property type="molecule type" value="Genomic_DNA"/>
</dbReference>
<dbReference type="EMBL" id="AY692264">
    <property type="protein sequence ID" value="AAU05255.1"/>
    <property type="molecule type" value="Genomic_DNA"/>
</dbReference>
<dbReference type="EMBL" id="AY587007">
    <property type="protein sequence ID" value="AAX12046.1"/>
    <property type="molecule type" value="Genomic_DNA"/>
</dbReference>
<dbReference type="RefSeq" id="YP_006946.1">
    <property type="nucleotide sequence ID" value="NC_005859.1"/>
</dbReference>
<dbReference type="SMR" id="Q6QGG9"/>
<dbReference type="GeneID" id="2777643"/>
<dbReference type="KEGG" id="vg:2777643"/>
<dbReference type="Proteomes" id="UP000002107">
    <property type="component" value="Genome"/>
</dbReference>
<dbReference type="Proteomes" id="UP000002141">
    <property type="component" value="Segment"/>
</dbReference>
<dbReference type="Proteomes" id="UP000002503">
    <property type="component" value="Segment"/>
</dbReference>
<dbReference type="GO" id="GO:0003677">
    <property type="term" value="F:DNA binding"/>
    <property type="evidence" value="ECO:0007669"/>
    <property type="project" value="UniProtKB-KW"/>
</dbReference>
<organism>
    <name type="scientific">Escherichia phage T5</name>
    <name type="common">Enterobacteria phage T5</name>
    <dbReference type="NCBI Taxonomy" id="2695836"/>
    <lineage>
        <taxon>Viruses</taxon>
        <taxon>Duplodnaviria</taxon>
        <taxon>Heunggongvirae</taxon>
        <taxon>Uroviricota</taxon>
        <taxon>Caudoviricetes</taxon>
        <taxon>Demerecviridae</taxon>
        <taxon>Markadamsvirinae</taxon>
        <taxon>Tequintavirus</taxon>
        <taxon>Tequintavirus T5</taxon>
    </lineage>
</organism>
<comment type="function">
    <text evidence="1">Putative transcription factor required for the expression of viral late genes.</text>
</comment>
<gene>
    <name evidence="2" type="primary">D5</name>
    <name type="ORF">ORF109</name>
    <name evidence="2" type="ORF">T5.118</name>
    <name evidence="3" type="ORF">T5p116</name>
</gene>
<accession>Q6QGG9</accession>